<organism>
    <name type="scientific">Arabidopsis thaliana</name>
    <name type="common">Mouse-ear cress</name>
    <dbReference type="NCBI Taxonomy" id="3702"/>
    <lineage>
        <taxon>Eukaryota</taxon>
        <taxon>Viridiplantae</taxon>
        <taxon>Streptophyta</taxon>
        <taxon>Embryophyta</taxon>
        <taxon>Tracheophyta</taxon>
        <taxon>Spermatophyta</taxon>
        <taxon>Magnoliopsida</taxon>
        <taxon>eudicotyledons</taxon>
        <taxon>Gunneridae</taxon>
        <taxon>Pentapetalae</taxon>
        <taxon>rosids</taxon>
        <taxon>malvids</taxon>
        <taxon>Brassicales</taxon>
        <taxon>Brassicaceae</taxon>
        <taxon>Camelineae</taxon>
        <taxon>Arabidopsis</taxon>
    </lineage>
</organism>
<feature type="chain" id="PRO_0000421032" description="Glyoxylate/succinic semialdehyde reductase 1">
    <location>
        <begin position="1"/>
        <end position="289"/>
    </location>
</feature>
<feature type="active site" evidence="1">
    <location>
        <position position="170"/>
    </location>
</feature>
<feature type="binding site" evidence="2">
    <location>
        <begin position="4"/>
        <end position="18"/>
    </location>
    <ligand>
        <name>NADP(+)</name>
        <dbReference type="ChEBI" id="CHEBI:58349"/>
    </ligand>
</feature>
<feature type="binding site" evidence="2">
    <location>
        <position position="95"/>
    </location>
    <ligand>
        <name>NADP(+)</name>
        <dbReference type="ChEBI" id="CHEBI:58349"/>
    </ligand>
</feature>
<feature type="binding site" evidence="2">
    <location>
        <position position="238"/>
    </location>
    <ligand>
        <name>NADP(+)</name>
        <dbReference type="ChEBI" id="CHEBI:58349"/>
    </ligand>
</feature>
<feature type="modified residue" description="N-acetylmethionine" evidence="13">
    <location>
        <position position="1"/>
    </location>
</feature>
<feature type="splice variant" id="VSP_045054" description="In isoform 2." evidence="11">
    <location>
        <begin position="73"/>
        <end position="83"/>
    </location>
</feature>
<feature type="sequence conflict" description="In Ref. 1; AAK94781." evidence="12" ref="1">
    <original>N</original>
    <variation>T</variation>
    <location>
        <position position="223"/>
    </location>
</feature>
<feature type="sequence conflict" description="In Ref. 5; BAH19592." evidence="12" ref="5">
    <original>A</original>
    <variation>V</variation>
    <location>
        <position position="263"/>
    </location>
</feature>
<feature type="strand" evidence="14">
    <location>
        <begin position="2"/>
        <end position="6"/>
    </location>
</feature>
<feature type="helix" evidence="14">
    <location>
        <begin position="10"/>
        <end position="21"/>
    </location>
</feature>
<feature type="strand" evidence="14">
    <location>
        <begin position="25"/>
        <end position="29"/>
    </location>
</feature>
<feature type="helix" evidence="14">
    <location>
        <begin position="33"/>
        <end position="36"/>
    </location>
</feature>
<feature type="helix" evidence="14">
    <location>
        <begin position="37"/>
        <end position="41"/>
    </location>
</feature>
<feature type="helix" evidence="14">
    <location>
        <begin position="50"/>
        <end position="56"/>
    </location>
</feature>
<feature type="strand" evidence="14">
    <location>
        <begin position="58"/>
        <end position="62"/>
    </location>
</feature>
<feature type="helix" evidence="14">
    <location>
        <begin position="67"/>
        <end position="75"/>
    </location>
</feature>
<feature type="helix" evidence="14">
    <location>
        <begin position="80"/>
        <end position="83"/>
    </location>
</feature>
<feature type="strand" evidence="14">
    <location>
        <begin position="89"/>
        <end position="92"/>
    </location>
</feature>
<feature type="helix" evidence="14">
    <location>
        <begin position="98"/>
        <end position="110"/>
    </location>
</feature>
<feature type="strand" evidence="14">
    <location>
        <begin position="114"/>
        <end position="117"/>
    </location>
</feature>
<feature type="helix" evidence="14">
    <location>
        <begin position="124"/>
        <end position="129"/>
    </location>
</feature>
<feature type="strand" evidence="14">
    <location>
        <begin position="132"/>
        <end position="138"/>
    </location>
</feature>
<feature type="helix" evidence="14">
    <location>
        <begin position="140"/>
        <end position="153"/>
    </location>
</feature>
<feature type="strand" evidence="14">
    <location>
        <begin position="154"/>
        <end position="159"/>
    </location>
</feature>
<feature type="helix" evidence="14">
    <location>
        <begin position="165"/>
        <end position="193"/>
    </location>
</feature>
<feature type="helix" evidence="14">
    <location>
        <begin position="198"/>
        <end position="207"/>
    </location>
</feature>
<feature type="helix" evidence="14">
    <location>
        <begin position="213"/>
        <end position="223"/>
    </location>
</feature>
<feature type="strand" evidence="14">
    <location>
        <begin position="230"/>
        <end position="232"/>
    </location>
</feature>
<feature type="helix" evidence="14">
    <location>
        <begin position="233"/>
        <end position="249"/>
    </location>
</feature>
<feature type="helix" evidence="14">
    <location>
        <begin position="255"/>
        <end position="269"/>
    </location>
</feature>
<feature type="helix" evidence="14">
    <location>
        <begin position="277"/>
        <end position="280"/>
    </location>
</feature>
<feature type="helix" evidence="14">
    <location>
        <begin position="281"/>
        <end position="285"/>
    </location>
</feature>
<proteinExistence type="evidence at protein level"/>
<comment type="function">
    <text evidence="3 8 9">Catalyzes the NADPH-dependent reduction of glyoxylate to glycolate as well as succinic semialdehyde (SSA) to gamma-hydroxybutyrate in vitro. May function in redox homeostasis and play a role in oxidative stress tolerance by detoxifying glyoxylate and SSA generated in glycolate metabolism and GABA metabolism, respectively.</text>
</comment>
<comment type="catalytic activity">
    <reaction evidence="8 9">
        <text>glycolate + NADP(+) = glyoxylate + NADPH + H(+)</text>
        <dbReference type="Rhea" id="RHEA:10992"/>
        <dbReference type="ChEBI" id="CHEBI:15378"/>
        <dbReference type="ChEBI" id="CHEBI:29805"/>
        <dbReference type="ChEBI" id="CHEBI:36655"/>
        <dbReference type="ChEBI" id="CHEBI:57783"/>
        <dbReference type="ChEBI" id="CHEBI:58349"/>
        <dbReference type="EC" id="1.1.1.79"/>
    </reaction>
</comment>
<comment type="catalytic activity">
    <reaction evidence="8 9">
        <text>4-hydroxybutanoate + NADP(+) = succinate semialdehyde + NADPH + H(+)</text>
        <dbReference type="Rhea" id="RHEA:26381"/>
        <dbReference type="ChEBI" id="CHEBI:15378"/>
        <dbReference type="ChEBI" id="CHEBI:16724"/>
        <dbReference type="ChEBI" id="CHEBI:57706"/>
        <dbReference type="ChEBI" id="CHEBI:57783"/>
        <dbReference type="ChEBI" id="CHEBI:58349"/>
        <dbReference type="EC" id="1.1.1.n11"/>
    </reaction>
</comment>
<comment type="activity regulation">
    <text evidence="12">The ratio of NADPH/NADP(+) may regulate enzymatic activity.</text>
</comment>
<comment type="biophysicochemical properties">
    <kinetics>
        <KM evidence="8 9">4.5 uM for glyoxylate</KM>
        <KM evidence="8 9">870 uM for succinate semialdehyde</KM>
        <KM evidence="8 9">2.2 uM for NADPH (in the presence of glyoxylate as cosubstrate)</KM>
        <KM evidence="8 9">2.6 uM for NADPH (in the presence of succinate semialdehyde as cosubstrate)</KM>
    </kinetics>
</comment>
<comment type="subcellular location">
    <subcellularLocation>
        <location evidence="4 7">Cytoplasm</location>
        <location evidence="4 7">Cytosol</location>
    </subcellularLocation>
    <text>According to PubMed:22309191, GLYR1 does not localize in the peroxisome as initially described in PubMed:18495639.</text>
</comment>
<comment type="alternative products">
    <event type="alternative splicing"/>
    <isoform>
        <id>Q9LSV0-1</id>
        <name>1</name>
        <sequence type="displayed"/>
    </isoform>
    <isoform>
        <id>Q9LSV0-2</id>
        <name>2</name>
        <sequence type="described" ref="VSP_045054"/>
    </isoform>
</comment>
<comment type="induction">
    <text evidence="5 6">By salinity, drought, submergence, cold and heat stresses, and ozone.</text>
</comment>
<comment type="miscellaneous">
    <text>Follows a sequentially ordered Bi-Bi catalytic mechanism involving the complexation of NADPH to the enzyme before glyoxylate or SSA, and the release of NADP(+) before glycolate or gamma-hydroxybutyrate, respectively. Although GLYR1 acts as an aldo/keto reductase, it has no significant homology with either mammalian and bacterial NADPH-dependent SSA reductases.</text>
</comment>
<comment type="similarity">
    <text evidence="12">Belongs to the HIBADH-related family. NP60 subfamily.</text>
</comment>
<comment type="sequence caution" evidence="12">
    <conflict type="frameshift">
        <sequence resource="EMBL-CDS" id="AAK83640"/>
    </conflict>
</comment>
<name>GLYR1_ARATH</name>
<sequence>MEVGFLGLGIMGKAMSMNLLKNGFKVTVWNRTLSKCDELVEHGASVCESPAEVIKKCKYTIAMLSDPCAALSVVFDKGGVLEQICEGKGYIDMSTVDAETSLKINEAITGKGGRFVEGPVSGSKKPAEDGQLIILAAGDKALFEESIPAFDVLGKRSFYLGQVGNGAKMKLIVNMIMGSMMNAFSEGLVLADKSGLSSDTLLDILDLGAMTNPMFKGKGPSMNKSSYPPAFPLKHQQKDMRLALALGDENAVSMPVAAAANEAFKKARSLGLGDLDFSAVIEAVKFSRE</sequence>
<keyword id="KW-0002">3D-structure</keyword>
<keyword id="KW-0007">Acetylation</keyword>
<keyword id="KW-0025">Alternative splicing</keyword>
<keyword id="KW-0963">Cytoplasm</keyword>
<keyword id="KW-0520">NAD</keyword>
<keyword id="KW-0521">NADP</keyword>
<keyword id="KW-0560">Oxidoreductase</keyword>
<keyword id="KW-1185">Reference proteome</keyword>
<keyword id="KW-0346">Stress response</keyword>
<dbReference type="EC" id="1.1.1.79" evidence="8 9"/>
<dbReference type="EC" id="1.1.1.n11" evidence="8 9"/>
<dbReference type="EMBL" id="AY044183">
    <property type="protein sequence ID" value="AAK94781.1"/>
    <property type="molecule type" value="mRNA"/>
</dbReference>
<dbReference type="EMBL" id="AB025639">
    <property type="protein sequence ID" value="BAB01322.1"/>
    <property type="molecule type" value="Genomic_DNA"/>
</dbReference>
<dbReference type="EMBL" id="CP002686">
    <property type="protein sequence ID" value="AEE77021.1"/>
    <property type="molecule type" value="Genomic_DNA"/>
</dbReference>
<dbReference type="EMBL" id="CP002686">
    <property type="protein sequence ID" value="AEE77022.1"/>
    <property type="molecule type" value="Genomic_DNA"/>
</dbReference>
<dbReference type="EMBL" id="AY049298">
    <property type="protein sequence ID" value="AAK83640.1"/>
    <property type="status" value="ALT_FRAME"/>
    <property type="molecule type" value="mRNA"/>
</dbReference>
<dbReference type="EMBL" id="AK316884">
    <property type="protein sequence ID" value="BAH19592.1"/>
    <property type="molecule type" value="mRNA"/>
</dbReference>
<dbReference type="EMBL" id="BT025039">
    <property type="protein sequence ID" value="ABE02414.1"/>
    <property type="molecule type" value="mRNA"/>
</dbReference>
<dbReference type="RefSeq" id="NP_001030765.1">
    <molecule id="Q9LSV0-2"/>
    <property type="nucleotide sequence ID" value="NM_001035688.1"/>
</dbReference>
<dbReference type="RefSeq" id="NP_566768.1">
    <molecule id="Q9LSV0-1"/>
    <property type="nucleotide sequence ID" value="NM_113449.4"/>
</dbReference>
<dbReference type="PDB" id="3DOJ">
    <property type="method" value="X-ray"/>
    <property type="resolution" value="2.10 A"/>
    <property type="chains" value="A=1-289"/>
</dbReference>
<dbReference type="PDBsum" id="3DOJ"/>
<dbReference type="SMR" id="Q9LSV0"/>
<dbReference type="BioGRID" id="7470">
    <property type="interactions" value="6"/>
</dbReference>
<dbReference type="FunCoup" id="Q9LSV0">
    <property type="interactions" value="4578"/>
</dbReference>
<dbReference type="STRING" id="3702.Q9LSV0"/>
<dbReference type="iPTMnet" id="Q9LSV0"/>
<dbReference type="PaxDb" id="3702-AT3G25530.1"/>
<dbReference type="ProMEX" id="Q9LSV0"/>
<dbReference type="ProteomicsDB" id="248530">
    <molecule id="Q9LSV0-1"/>
</dbReference>
<dbReference type="EnsemblPlants" id="AT3G25530.1">
    <molecule id="Q9LSV0-1"/>
    <property type="protein sequence ID" value="AT3G25530.1"/>
    <property type="gene ID" value="AT3G25530"/>
</dbReference>
<dbReference type="EnsemblPlants" id="AT3G25530.2">
    <molecule id="Q9LSV0-2"/>
    <property type="protein sequence ID" value="AT3G25530.2"/>
    <property type="gene ID" value="AT3G25530"/>
</dbReference>
<dbReference type="GeneID" id="822139"/>
<dbReference type="Gramene" id="AT3G25530.1">
    <molecule id="Q9LSV0-1"/>
    <property type="protein sequence ID" value="AT3G25530.1"/>
    <property type="gene ID" value="AT3G25530"/>
</dbReference>
<dbReference type="Gramene" id="AT3G25530.2">
    <molecule id="Q9LSV0-2"/>
    <property type="protein sequence ID" value="AT3G25530.2"/>
    <property type="gene ID" value="AT3G25530"/>
</dbReference>
<dbReference type="KEGG" id="ath:AT3G25530"/>
<dbReference type="Araport" id="AT3G25530"/>
<dbReference type="TAIR" id="AT3G25530">
    <property type="gene designation" value="GLYR1"/>
</dbReference>
<dbReference type="eggNOG" id="KOG0409">
    <property type="taxonomic scope" value="Eukaryota"/>
</dbReference>
<dbReference type="InParanoid" id="Q9LSV0"/>
<dbReference type="OMA" id="LHDKDFG"/>
<dbReference type="OrthoDB" id="435038at2759"/>
<dbReference type="PhylomeDB" id="Q9LSV0"/>
<dbReference type="BioCyc" id="ARA:AT3G25530-MONOMER"/>
<dbReference type="BioCyc" id="MetaCyc:MONOMER-10405"/>
<dbReference type="BRENDA" id="1.1.1.26">
    <property type="organism ID" value="399"/>
</dbReference>
<dbReference type="BRENDA" id="1.1.1.61">
    <property type="organism ID" value="399"/>
</dbReference>
<dbReference type="BRENDA" id="1.1.1.79">
    <property type="organism ID" value="399"/>
</dbReference>
<dbReference type="BRENDA" id="1.1.1.B47">
    <property type="organism ID" value="399"/>
</dbReference>
<dbReference type="CD-CODE" id="4299E36E">
    <property type="entry name" value="Nucleolus"/>
</dbReference>
<dbReference type="EvolutionaryTrace" id="Q9LSV0"/>
<dbReference type="PRO" id="PR:Q9LSV0"/>
<dbReference type="Proteomes" id="UP000006548">
    <property type="component" value="Chromosome 3"/>
</dbReference>
<dbReference type="ExpressionAtlas" id="Q9LSV0">
    <property type="expression patterns" value="baseline and differential"/>
</dbReference>
<dbReference type="GO" id="GO:0005829">
    <property type="term" value="C:cytosol"/>
    <property type="evidence" value="ECO:0000314"/>
    <property type="project" value="TAIR"/>
</dbReference>
<dbReference type="GO" id="GO:0003858">
    <property type="term" value="F:3-hydroxybutyrate dehydrogenase activity"/>
    <property type="evidence" value="ECO:0000315"/>
    <property type="project" value="TAIR"/>
</dbReference>
<dbReference type="GO" id="GO:0030267">
    <property type="term" value="F:glyoxylate reductase (NADPH) activity"/>
    <property type="evidence" value="ECO:0007669"/>
    <property type="project" value="UniProtKB-EC"/>
</dbReference>
<dbReference type="GO" id="GO:0051287">
    <property type="term" value="F:NAD binding"/>
    <property type="evidence" value="ECO:0007669"/>
    <property type="project" value="InterPro"/>
</dbReference>
<dbReference type="GO" id="GO:0050661">
    <property type="term" value="F:NADP binding"/>
    <property type="evidence" value="ECO:0007669"/>
    <property type="project" value="InterPro"/>
</dbReference>
<dbReference type="GO" id="GO:0006979">
    <property type="term" value="P:response to oxidative stress"/>
    <property type="evidence" value="ECO:0000315"/>
    <property type="project" value="TAIR"/>
</dbReference>
<dbReference type="FunFam" id="1.10.1040.10:FF:000016">
    <property type="entry name" value="Glyoxylate/succinic semialdehyde reductase 2"/>
    <property type="match status" value="1"/>
</dbReference>
<dbReference type="FunFam" id="3.40.50.720:FF:000058">
    <property type="entry name" value="Putative oxidoreductase GLYR1 homolog"/>
    <property type="match status" value="1"/>
</dbReference>
<dbReference type="Gene3D" id="1.10.1040.10">
    <property type="entry name" value="N-(1-d-carboxylethyl)-l-norvaline Dehydrogenase, domain 2"/>
    <property type="match status" value="1"/>
</dbReference>
<dbReference type="Gene3D" id="3.40.50.720">
    <property type="entry name" value="NAD(P)-binding Rossmann-like Domain"/>
    <property type="match status" value="1"/>
</dbReference>
<dbReference type="InterPro" id="IPR002204">
    <property type="entry name" value="3-OH-isobutyrate_DH-rel_CS"/>
</dbReference>
<dbReference type="InterPro" id="IPR008927">
    <property type="entry name" value="6-PGluconate_DH-like_C_sf"/>
</dbReference>
<dbReference type="InterPro" id="IPR013328">
    <property type="entry name" value="6PGD_dom2"/>
</dbReference>
<dbReference type="InterPro" id="IPR006115">
    <property type="entry name" value="6PGDH_NADP-bd"/>
</dbReference>
<dbReference type="InterPro" id="IPR029154">
    <property type="entry name" value="HIBADH-like_NADP-bd"/>
</dbReference>
<dbReference type="InterPro" id="IPR015815">
    <property type="entry name" value="HIBADH-related"/>
</dbReference>
<dbReference type="InterPro" id="IPR051265">
    <property type="entry name" value="HIBADH-related_NP60_sf"/>
</dbReference>
<dbReference type="InterPro" id="IPR036291">
    <property type="entry name" value="NAD(P)-bd_dom_sf"/>
</dbReference>
<dbReference type="PANTHER" id="PTHR43580:SF9">
    <property type="entry name" value="GLYOXYLATE_SUCCINIC SEMIALDEHYDE REDUCTASE 1"/>
    <property type="match status" value="1"/>
</dbReference>
<dbReference type="PANTHER" id="PTHR43580">
    <property type="entry name" value="OXIDOREDUCTASE GLYR1-RELATED"/>
    <property type="match status" value="1"/>
</dbReference>
<dbReference type="Pfam" id="PF14833">
    <property type="entry name" value="NAD_binding_11"/>
    <property type="match status" value="1"/>
</dbReference>
<dbReference type="Pfam" id="PF03446">
    <property type="entry name" value="NAD_binding_2"/>
    <property type="match status" value="1"/>
</dbReference>
<dbReference type="PIRSF" id="PIRSF000103">
    <property type="entry name" value="HIBADH"/>
    <property type="match status" value="1"/>
</dbReference>
<dbReference type="SUPFAM" id="SSF48179">
    <property type="entry name" value="6-phosphogluconate dehydrogenase C-terminal domain-like"/>
    <property type="match status" value="1"/>
</dbReference>
<dbReference type="SUPFAM" id="SSF51735">
    <property type="entry name" value="NAD(P)-binding Rossmann-fold domains"/>
    <property type="match status" value="1"/>
</dbReference>
<dbReference type="PROSITE" id="PS00895">
    <property type="entry name" value="3_HYDROXYISOBUT_DH"/>
    <property type="match status" value="1"/>
</dbReference>
<evidence type="ECO:0000250" key="1"/>
<evidence type="ECO:0000250" key="2">
    <source>
        <dbReference type="UniProtKB" id="Q49A26"/>
    </source>
</evidence>
<evidence type="ECO:0000269" key="3">
    <source>
    </source>
</evidence>
<evidence type="ECO:0000269" key="4">
    <source>
    </source>
</evidence>
<evidence type="ECO:0000269" key="5">
    <source>
    </source>
</evidence>
<evidence type="ECO:0000269" key="6">
    <source>
    </source>
</evidence>
<evidence type="ECO:0000269" key="7">
    <source>
    </source>
</evidence>
<evidence type="ECO:0000269" key="8">
    <source ref="7"/>
</evidence>
<evidence type="ECO:0000269" key="9">
    <source ref="8"/>
</evidence>
<evidence type="ECO:0000303" key="10">
    <source>
    </source>
</evidence>
<evidence type="ECO:0000303" key="11">
    <source>
    </source>
</evidence>
<evidence type="ECO:0000305" key="12"/>
<evidence type="ECO:0007744" key="13">
    <source>
    </source>
</evidence>
<evidence type="ECO:0007829" key="14">
    <source>
        <dbReference type="PDB" id="3DOJ"/>
    </source>
</evidence>
<protein>
    <recommendedName>
        <fullName>Glyoxylate/succinic semialdehyde reductase 1</fullName>
        <shortName>AtGLYR1</shortName>
        <shortName>AtGR1</shortName>
        <shortName>SSA reductase 1</shortName>
        <ecNumber evidence="8 9">1.1.1.79</ecNumber>
        <ecNumber evidence="8 9">1.1.1.n11</ecNumber>
    </recommendedName>
    <alternativeName>
        <fullName evidence="10">Gamma-hydroxybutyrate dehydrogenase</fullName>
        <shortName>AtGHBDH</shortName>
    </alternativeName>
</protein>
<accession>Q9LSV0</accession>
<accession>B9DFS5</accession>
<accession>F4J913</accession>
<accession>Q94A74</accession>
<accession>Q94B07</accession>
<gene>
    <name type="primary">GLYR1</name>
    <name type="synonym">GR1</name>
    <name type="ordered locus">At3g25530</name>
    <name type="ORF">MWL2.18</name>
</gene>
<reference key="1">
    <citation type="journal article" date="2003" name="J. Biol. Chem.">
        <title>A novel gamma-hydroxybutyrate dehydrogenase: identification and expression of an Arabidopsis cDNA and potential role under oxygen deficiency.</title>
        <authorList>
            <person name="Breitkreuz K.E."/>
            <person name="Allan W.L."/>
            <person name="Van Cauwenberghe O.R."/>
            <person name="Jakobs C."/>
            <person name="Talibi D."/>
            <person name="Andre B."/>
            <person name="Shelp B.J."/>
        </authorList>
    </citation>
    <scope>NUCLEOTIDE SEQUENCE [MRNA] (ISOFORM 1)</scope>
    <scope>FUNCTION</scope>
    <source>
        <strain>cv. Landsberg erecta</strain>
    </source>
</reference>
<reference key="2">
    <citation type="journal article" date="2000" name="DNA Res.">
        <title>Structural analysis of Arabidopsis thaliana chromosome 3. I. Sequence features of the regions of 4,504,864 bp covered by sixty P1 and TAC clones.</title>
        <authorList>
            <person name="Sato S."/>
            <person name="Nakamura Y."/>
            <person name="Kaneko T."/>
            <person name="Katoh T."/>
            <person name="Asamizu E."/>
            <person name="Tabata S."/>
        </authorList>
    </citation>
    <scope>NUCLEOTIDE SEQUENCE [LARGE SCALE GENOMIC DNA]</scope>
    <source>
        <strain>cv. Columbia</strain>
    </source>
</reference>
<reference key="3">
    <citation type="journal article" date="2017" name="Plant J.">
        <title>Araport11: a complete reannotation of the Arabidopsis thaliana reference genome.</title>
        <authorList>
            <person name="Cheng C.Y."/>
            <person name="Krishnakumar V."/>
            <person name="Chan A.P."/>
            <person name="Thibaud-Nissen F."/>
            <person name="Schobel S."/>
            <person name="Town C.D."/>
        </authorList>
    </citation>
    <scope>GENOME REANNOTATION</scope>
    <source>
        <strain>cv. Columbia</strain>
    </source>
</reference>
<reference key="4">
    <citation type="journal article" date="2003" name="Science">
        <title>Empirical analysis of transcriptional activity in the Arabidopsis genome.</title>
        <authorList>
            <person name="Yamada K."/>
            <person name="Lim J."/>
            <person name="Dale J.M."/>
            <person name="Chen H."/>
            <person name="Shinn P."/>
            <person name="Palm C.J."/>
            <person name="Southwick A.M."/>
            <person name="Wu H.C."/>
            <person name="Kim C.J."/>
            <person name="Nguyen M."/>
            <person name="Pham P.K."/>
            <person name="Cheuk R.F."/>
            <person name="Karlin-Newmann G."/>
            <person name="Liu S.X."/>
            <person name="Lam B."/>
            <person name="Sakano H."/>
            <person name="Wu T."/>
            <person name="Yu G."/>
            <person name="Miranda M."/>
            <person name="Quach H.L."/>
            <person name="Tripp M."/>
            <person name="Chang C.H."/>
            <person name="Lee J.M."/>
            <person name="Toriumi M.J."/>
            <person name="Chan M.M."/>
            <person name="Tang C.C."/>
            <person name="Onodera C.S."/>
            <person name="Deng J.M."/>
            <person name="Akiyama K."/>
            <person name="Ansari Y."/>
            <person name="Arakawa T."/>
            <person name="Banh J."/>
            <person name="Banno F."/>
            <person name="Bowser L."/>
            <person name="Brooks S.Y."/>
            <person name="Carninci P."/>
            <person name="Chao Q."/>
            <person name="Choy N."/>
            <person name="Enju A."/>
            <person name="Goldsmith A.D."/>
            <person name="Gurjal M."/>
            <person name="Hansen N.F."/>
            <person name="Hayashizaki Y."/>
            <person name="Johnson-Hopson C."/>
            <person name="Hsuan V.W."/>
            <person name="Iida K."/>
            <person name="Karnes M."/>
            <person name="Khan S."/>
            <person name="Koesema E."/>
            <person name="Ishida J."/>
            <person name="Jiang P.X."/>
            <person name="Jones T."/>
            <person name="Kawai J."/>
            <person name="Kamiya A."/>
            <person name="Meyers C."/>
            <person name="Nakajima M."/>
            <person name="Narusaka M."/>
            <person name="Seki M."/>
            <person name="Sakurai T."/>
            <person name="Satou M."/>
            <person name="Tamse R."/>
            <person name="Vaysberg M."/>
            <person name="Wallender E.K."/>
            <person name="Wong C."/>
            <person name="Yamamura Y."/>
            <person name="Yuan S."/>
            <person name="Shinozaki K."/>
            <person name="Davis R.W."/>
            <person name="Theologis A."/>
            <person name="Ecker J.R."/>
        </authorList>
    </citation>
    <scope>NUCLEOTIDE SEQUENCE [LARGE SCALE MRNA] (ISOFORM 1)</scope>
    <source>
        <strain>cv. Columbia</strain>
    </source>
</reference>
<reference key="5">
    <citation type="journal article" date="2009" name="DNA Res.">
        <title>Analysis of multiple occurrences of alternative splicing events in Arabidopsis thaliana using novel sequenced full-length cDNAs.</title>
        <authorList>
            <person name="Iida K."/>
            <person name="Fukami-Kobayashi K."/>
            <person name="Toyoda A."/>
            <person name="Sakaki Y."/>
            <person name="Kobayashi M."/>
            <person name="Seki M."/>
            <person name="Shinozaki K."/>
        </authorList>
    </citation>
    <scope>NUCLEOTIDE SEQUENCE [LARGE SCALE MRNA] (ISOFORM 2)</scope>
    <source>
        <strain>cv. Columbia</strain>
    </source>
</reference>
<reference key="6">
    <citation type="submission" date="2006-04" db="EMBL/GenBank/DDBJ databases">
        <title>Arabidopsis ORF clones.</title>
        <authorList>
            <person name="Shinn P."/>
            <person name="Chen H."/>
            <person name="Kim C.J."/>
            <person name="Ecker J.R."/>
        </authorList>
    </citation>
    <scope>NUCLEOTIDE SEQUENCE [LARGE SCALE MRNA] (ISOFORM 1)</scope>
    <source>
        <strain>cv. Columbia</strain>
    </source>
</reference>
<reference key="7">
    <citation type="journal article" date="2007" name="Can. J. Bot.">
        <title>Characteristics of an Arabidopsis glyoxylate reductase: general biochemical properties and substrate specificity for the recombinant protein, and developmental expression and implications for glyoxylate and succinic semialdehyde metabolism in planta.</title>
        <authorList>
            <person name="Hoover G.J."/>
            <person name="Van Cauwenberghe O.R."/>
            <person name="Breitkreuz K.E."/>
            <person name="Clark S.M."/>
            <person name="Merrill A.R."/>
            <person name="Shelp B.J."/>
        </authorList>
    </citation>
    <scope>FUNCTION</scope>
    <scope>CATALYTIC ACTIVITY</scope>
    <scope>BIOPHYSICOCHEMICAL PROPERTIES</scope>
</reference>
<reference key="8">
    <citation type="journal article" date="2007" name="Can. J. Bot.">
        <title>Kinetic mechanism of a recombinant Arabidopsis glyoxylate reductase: studies of initial velocity, dead-end inhibition and product inhibition.</title>
        <authorList>
            <person name="Hoover G.J."/>
            <person name="Prentice G.A."/>
            <person name="Merrill A.R."/>
            <person name="Shelp B.J."/>
        </authorList>
    </citation>
    <scope>FUNCTION</scope>
    <scope>CATALYTIC ACTIVITY</scope>
    <scope>KINETIC PARAMETERS</scope>
</reference>
<reference key="9">
    <citation type="journal article" date="2008" name="J. Exp. Bot.">
        <title>Identification and characterization of a plastid-localized Arabidopsis glyoxylate reductase isoform: comparison with a cytosolic isoform and implications for cellular redox homeostasis and aldehyde detoxification.</title>
        <authorList>
            <person name="Simpson J.P."/>
            <person name="Di Leo R."/>
            <person name="Dhanoa P.K."/>
            <person name="Allan W.L."/>
            <person name="Makhmoudova A."/>
            <person name="Clark S.M."/>
            <person name="Hoover G.J."/>
            <person name="Mullen R.T."/>
            <person name="Shelp B.J."/>
        </authorList>
    </citation>
    <scope>SUBCELLULAR LOCATION</scope>
</reference>
<reference key="10">
    <citation type="journal article" date="2008" name="J. Exp. Bot.">
        <title>Gamma-hydroxybutyrate accumulation in Arabidopsis and tobacco plants is a general response to abiotic stress: putative regulation by redox balance and glyoxylate reductase isoforms.</title>
        <authorList>
            <person name="Allan W.L."/>
            <person name="Simpson J.P."/>
            <person name="Clark S.M."/>
            <person name="Shelp B.J."/>
        </authorList>
    </citation>
    <scope>INDUCTION</scope>
</reference>
<reference key="11">
    <citation type="journal article" date="2009" name="Physiol. Plantarum">
        <title>Ethylene and salicylic acid control glutathione biosynthesis in ozone-exposed Arabidopsis thaliana.</title>
        <authorList>
            <person name="Yoshida S."/>
            <person name="Tamaoki M."/>
            <person name="Ioki M."/>
            <person name="Ogawa D."/>
            <person name="Sato Y."/>
            <person name="Aono M."/>
            <person name="Kubo A."/>
            <person name="Saji S."/>
            <person name="Saji H."/>
            <person name="Satoh S."/>
            <person name="Nakajima N."/>
        </authorList>
    </citation>
    <scope>INDUCTION BY OZONE</scope>
</reference>
<reference key="12">
    <citation type="journal article" date="2012" name="J. Integr. Plant Biol.">
        <title>Glyoxylate reductase isoform 1 is localized in the cytosol and not peroxisomes in plant cells.</title>
        <authorList>
            <person name="Ching S.L."/>
            <person name="Gidda S.K."/>
            <person name="Rochon A."/>
            <person name="van Cauwenberghe O.R."/>
            <person name="Shelp B.J."/>
            <person name="Mullen R.T."/>
        </authorList>
    </citation>
    <scope>SUBCELLULAR LOCATION</scope>
</reference>
<reference key="13">
    <citation type="journal article" date="2012" name="Mol. Cell. Proteomics">
        <title>Comparative large-scale characterisation of plant vs. mammal proteins reveals similar and idiosyncratic N-alpha acetylation features.</title>
        <authorList>
            <person name="Bienvenut W.V."/>
            <person name="Sumpton D."/>
            <person name="Martinez A."/>
            <person name="Lilla S."/>
            <person name="Espagne C."/>
            <person name="Meinnel T."/>
            <person name="Giglione C."/>
        </authorList>
    </citation>
    <scope>ACETYLATION [LARGE SCALE ANALYSIS] AT MET-1</scope>
    <scope>IDENTIFICATION BY MASS SPECTROMETRY [LARGE SCALE ANALYSIS]</scope>
</reference>
<reference key="14">
    <citation type="submission" date="2008-07" db="PDB data bank">
        <title>Cytosolic NADPH-dependent glyoxylate reductase from Arabidopsis: crystal structure and kinetic characterization of active site mutants.</title>
        <authorList>
            <person name="Hoover G."/>
            <person name="Jorgensen R."/>
            <person name="Merrill A.R."/>
            <person name="Shelp B.J."/>
        </authorList>
    </citation>
    <scope>X-RAY CRYSTALLOGRAPHY (2.10 ANGSTROMS)</scope>
</reference>